<protein>
    <recommendedName>
        <fullName evidence="1">Arginine repressor</fullName>
    </recommendedName>
</protein>
<accession>Q9CE11</accession>
<keyword id="KW-0028">Amino-acid biosynthesis</keyword>
<keyword id="KW-0055">Arginine biosynthesis</keyword>
<keyword id="KW-0963">Cytoplasm</keyword>
<keyword id="KW-0238">DNA-binding</keyword>
<keyword id="KW-1185">Reference proteome</keyword>
<keyword id="KW-0678">Repressor</keyword>
<keyword id="KW-0804">Transcription</keyword>
<keyword id="KW-0805">Transcription regulation</keyword>
<reference key="1">
    <citation type="journal article" date="2001" name="Genome Res.">
        <title>The complete genome sequence of the lactic acid bacterium Lactococcus lactis ssp. lactis IL1403.</title>
        <authorList>
            <person name="Bolotin A."/>
            <person name="Wincker P."/>
            <person name="Mauger S."/>
            <person name="Jaillon O."/>
            <person name="Malarme K."/>
            <person name="Weissenbach J."/>
            <person name="Ehrlich S.D."/>
            <person name="Sorokin A."/>
        </authorList>
    </citation>
    <scope>NUCLEOTIDE SEQUENCE [LARGE SCALE GENOMIC DNA]</scope>
    <source>
        <strain>IL1403</strain>
    </source>
</reference>
<sequence>MKRDKRLEIIKEIVTNNKISTQEELQSLLLERGVEVTQATLSRDIRKLNIIKKRDKGESFYSFLTSGNSKINSDLQLYFYNFVISAKSVGALVVIRTKLGEADVLANALDDERDSRTDILGTIAGADTLLVICASEKAANILTAEIKYILLG</sequence>
<organism>
    <name type="scientific">Lactococcus lactis subsp. lactis (strain IL1403)</name>
    <name type="common">Streptococcus lactis</name>
    <dbReference type="NCBI Taxonomy" id="272623"/>
    <lineage>
        <taxon>Bacteria</taxon>
        <taxon>Bacillati</taxon>
        <taxon>Bacillota</taxon>
        <taxon>Bacilli</taxon>
        <taxon>Lactobacillales</taxon>
        <taxon>Streptococcaceae</taxon>
        <taxon>Lactococcus</taxon>
    </lineage>
</organism>
<comment type="function">
    <text evidence="1">Regulates arginine biosynthesis genes.</text>
</comment>
<comment type="pathway">
    <text>Amino-acid biosynthesis; L-arginine biosynthesis [regulation].</text>
</comment>
<comment type="subcellular location">
    <subcellularLocation>
        <location evidence="1">Cytoplasm</location>
    </subcellularLocation>
</comment>
<comment type="similarity">
    <text evidence="1">Belongs to the ArgR family.</text>
</comment>
<evidence type="ECO:0000255" key="1">
    <source>
        <dbReference type="HAMAP-Rule" id="MF_00173"/>
    </source>
</evidence>
<dbReference type="EMBL" id="AE005176">
    <property type="protein sequence ID" value="AAK06137.1"/>
    <property type="molecule type" value="Genomic_DNA"/>
</dbReference>
<dbReference type="PIR" id="G86879">
    <property type="entry name" value="G86879"/>
</dbReference>
<dbReference type="RefSeq" id="NP_268196.1">
    <property type="nucleotide sequence ID" value="NC_002662.1"/>
</dbReference>
<dbReference type="RefSeq" id="WP_004254487.1">
    <property type="nucleotide sequence ID" value="NC_002662.1"/>
</dbReference>
<dbReference type="SMR" id="Q9CE11"/>
<dbReference type="PaxDb" id="272623-L0110"/>
<dbReference type="EnsemblBacteria" id="AAK06137">
    <property type="protein sequence ID" value="AAK06137"/>
    <property type="gene ID" value="L0110"/>
</dbReference>
<dbReference type="GeneID" id="89634392"/>
<dbReference type="KEGG" id="lla:L0110"/>
<dbReference type="PATRIC" id="fig|272623.7.peg.2196"/>
<dbReference type="eggNOG" id="COG1438">
    <property type="taxonomic scope" value="Bacteria"/>
</dbReference>
<dbReference type="HOGENOM" id="CLU_097103_3_0_9"/>
<dbReference type="OrthoDB" id="9807089at2"/>
<dbReference type="BRENDA" id="3.4.14.5">
    <property type="organism ID" value="2903"/>
</dbReference>
<dbReference type="UniPathway" id="UPA00068"/>
<dbReference type="Proteomes" id="UP000002196">
    <property type="component" value="Chromosome"/>
</dbReference>
<dbReference type="GO" id="GO:0005737">
    <property type="term" value="C:cytoplasm"/>
    <property type="evidence" value="ECO:0007669"/>
    <property type="project" value="UniProtKB-SubCell"/>
</dbReference>
<dbReference type="GO" id="GO:0034618">
    <property type="term" value="F:arginine binding"/>
    <property type="evidence" value="ECO:0007669"/>
    <property type="project" value="InterPro"/>
</dbReference>
<dbReference type="GO" id="GO:0003677">
    <property type="term" value="F:DNA binding"/>
    <property type="evidence" value="ECO:0007669"/>
    <property type="project" value="UniProtKB-KW"/>
</dbReference>
<dbReference type="GO" id="GO:0003700">
    <property type="term" value="F:DNA-binding transcription factor activity"/>
    <property type="evidence" value="ECO:0007669"/>
    <property type="project" value="UniProtKB-UniRule"/>
</dbReference>
<dbReference type="GO" id="GO:0006526">
    <property type="term" value="P:L-arginine biosynthetic process"/>
    <property type="evidence" value="ECO:0007669"/>
    <property type="project" value="UniProtKB-UniPathway"/>
</dbReference>
<dbReference type="GO" id="GO:0051259">
    <property type="term" value="P:protein complex oligomerization"/>
    <property type="evidence" value="ECO:0007669"/>
    <property type="project" value="InterPro"/>
</dbReference>
<dbReference type="GO" id="GO:1900079">
    <property type="term" value="P:regulation of arginine biosynthetic process"/>
    <property type="evidence" value="ECO:0007669"/>
    <property type="project" value="UniProtKB-UniRule"/>
</dbReference>
<dbReference type="Gene3D" id="3.30.1360.40">
    <property type="match status" value="1"/>
</dbReference>
<dbReference type="Gene3D" id="1.10.10.10">
    <property type="entry name" value="Winged helix-like DNA-binding domain superfamily/Winged helix DNA-binding domain"/>
    <property type="match status" value="1"/>
</dbReference>
<dbReference type="HAMAP" id="MF_00173">
    <property type="entry name" value="Arg_repressor"/>
    <property type="match status" value="1"/>
</dbReference>
<dbReference type="InterPro" id="IPR001669">
    <property type="entry name" value="Arg_repress"/>
</dbReference>
<dbReference type="InterPro" id="IPR020899">
    <property type="entry name" value="Arg_repress_C"/>
</dbReference>
<dbReference type="InterPro" id="IPR036251">
    <property type="entry name" value="Arg_repress_C_sf"/>
</dbReference>
<dbReference type="InterPro" id="IPR020900">
    <property type="entry name" value="Arg_repress_DNA-bd"/>
</dbReference>
<dbReference type="InterPro" id="IPR036388">
    <property type="entry name" value="WH-like_DNA-bd_sf"/>
</dbReference>
<dbReference type="InterPro" id="IPR036390">
    <property type="entry name" value="WH_DNA-bd_sf"/>
</dbReference>
<dbReference type="NCBIfam" id="TIGR01529">
    <property type="entry name" value="argR_whole"/>
    <property type="match status" value="1"/>
</dbReference>
<dbReference type="PANTHER" id="PTHR34471">
    <property type="entry name" value="ARGININE REPRESSOR"/>
    <property type="match status" value="1"/>
</dbReference>
<dbReference type="PANTHER" id="PTHR34471:SF1">
    <property type="entry name" value="ARGININE REPRESSOR"/>
    <property type="match status" value="1"/>
</dbReference>
<dbReference type="Pfam" id="PF01316">
    <property type="entry name" value="Arg_repressor"/>
    <property type="match status" value="1"/>
</dbReference>
<dbReference type="Pfam" id="PF02863">
    <property type="entry name" value="Arg_repressor_C"/>
    <property type="match status" value="1"/>
</dbReference>
<dbReference type="PRINTS" id="PR01467">
    <property type="entry name" value="ARGREPRESSOR"/>
</dbReference>
<dbReference type="SUPFAM" id="SSF55252">
    <property type="entry name" value="C-terminal domain of arginine repressor"/>
    <property type="match status" value="1"/>
</dbReference>
<dbReference type="SUPFAM" id="SSF46785">
    <property type="entry name" value="Winged helix' DNA-binding domain"/>
    <property type="match status" value="1"/>
</dbReference>
<feature type="chain" id="PRO_0000205094" description="Arginine repressor">
    <location>
        <begin position="1"/>
        <end position="152"/>
    </location>
</feature>
<name>ARGR_LACLA</name>
<proteinExistence type="inferred from homology"/>
<gene>
    <name evidence="1" type="primary">argR</name>
    <name type="ordered locus">LL2039</name>
    <name type="ORF">L0110</name>
</gene>